<accession>Q4FM02</accession>
<protein>
    <recommendedName>
        <fullName evidence="1">Serine--tRNA ligase</fullName>
        <ecNumber evidence="1">6.1.1.11</ecNumber>
    </recommendedName>
    <alternativeName>
        <fullName evidence="1">Seryl-tRNA synthetase</fullName>
        <shortName evidence="1">SerRS</shortName>
    </alternativeName>
    <alternativeName>
        <fullName evidence="1">Seryl-tRNA(Ser/Sec) synthetase</fullName>
    </alternativeName>
</protein>
<feature type="chain" id="PRO_1000019761" description="Serine--tRNA ligase">
    <location>
        <begin position="1"/>
        <end position="419"/>
    </location>
</feature>
<feature type="binding site" evidence="1">
    <location>
        <begin position="225"/>
        <end position="227"/>
    </location>
    <ligand>
        <name>L-serine</name>
        <dbReference type="ChEBI" id="CHEBI:33384"/>
    </ligand>
</feature>
<feature type="binding site" evidence="1">
    <location>
        <begin position="256"/>
        <end position="258"/>
    </location>
    <ligand>
        <name>ATP</name>
        <dbReference type="ChEBI" id="CHEBI:30616"/>
    </ligand>
</feature>
<feature type="binding site" evidence="1">
    <location>
        <position position="279"/>
    </location>
    <ligand>
        <name>L-serine</name>
        <dbReference type="ChEBI" id="CHEBI:33384"/>
    </ligand>
</feature>
<feature type="binding site" evidence="1">
    <location>
        <begin position="343"/>
        <end position="346"/>
    </location>
    <ligand>
        <name>ATP</name>
        <dbReference type="ChEBI" id="CHEBI:30616"/>
    </ligand>
</feature>
<feature type="binding site" evidence="1">
    <location>
        <position position="378"/>
    </location>
    <ligand>
        <name>L-serine</name>
        <dbReference type="ChEBI" id="CHEBI:33384"/>
    </ligand>
</feature>
<proteinExistence type="inferred from homology"/>
<comment type="function">
    <text evidence="1">Catalyzes the attachment of serine to tRNA(Ser). Is also able to aminoacylate tRNA(Sec) with serine, to form the misacylated tRNA L-seryl-tRNA(Sec), which will be further converted into selenocysteinyl-tRNA(Sec).</text>
</comment>
<comment type="catalytic activity">
    <reaction evidence="1">
        <text>tRNA(Ser) + L-serine + ATP = L-seryl-tRNA(Ser) + AMP + diphosphate + H(+)</text>
        <dbReference type="Rhea" id="RHEA:12292"/>
        <dbReference type="Rhea" id="RHEA-COMP:9669"/>
        <dbReference type="Rhea" id="RHEA-COMP:9703"/>
        <dbReference type="ChEBI" id="CHEBI:15378"/>
        <dbReference type="ChEBI" id="CHEBI:30616"/>
        <dbReference type="ChEBI" id="CHEBI:33019"/>
        <dbReference type="ChEBI" id="CHEBI:33384"/>
        <dbReference type="ChEBI" id="CHEBI:78442"/>
        <dbReference type="ChEBI" id="CHEBI:78533"/>
        <dbReference type="ChEBI" id="CHEBI:456215"/>
        <dbReference type="EC" id="6.1.1.11"/>
    </reaction>
</comment>
<comment type="catalytic activity">
    <reaction evidence="1">
        <text>tRNA(Sec) + L-serine + ATP = L-seryl-tRNA(Sec) + AMP + diphosphate + H(+)</text>
        <dbReference type="Rhea" id="RHEA:42580"/>
        <dbReference type="Rhea" id="RHEA-COMP:9742"/>
        <dbReference type="Rhea" id="RHEA-COMP:10128"/>
        <dbReference type="ChEBI" id="CHEBI:15378"/>
        <dbReference type="ChEBI" id="CHEBI:30616"/>
        <dbReference type="ChEBI" id="CHEBI:33019"/>
        <dbReference type="ChEBI" id="CHEBI:33384"/>
        <dbReference type="ChEBI" id="CHEBI:78442"/>
        <dbReference type="ChEBI" id="CHEBI:78533"/>
        <dbReference type="ChEBI" id="CHEBI:456215"/>
        <dbReference type="EC" id="6.1.1.11"/>
    </reaction>
</comment>
<comment type="pathway">
    <text evidence="1">Aminoacyl-tRNA biosynthesis; selenocysteinyl-tRNA(Sec) biosynthesis; L-seryl-tRNA(Sec) from L-serine and tRNA(Sec): step 1/1.</text>
</comment>
<comment type="subunit">
    <text evidence="1">Homodimer. The tRNA molecule binds across the dimer.</text>
</comment>
<comment type="subcellular location">
    <subcellularLocation>
        <location evidence="1">Cytoplasm</location>
    </subcellularLocation>
</comment>
<comment type="domain">
    <text evidence="1">Consists of two distinct domains, a catalytic core and a N-terminal extension that is involved in tRNA binding.</text>
</comment>
<comment type="similarity">
    <text evidence="1">Belongs to the class-II aminoacyl-tRNA synthetase family. Type-1 seryl-tRNA synthetase subfamily.</text>
</comment>
<reference key="1">
    <citation type="journal article" date="2005" name="Science">
        <title>Genome streamlining in a cosmopolitan oceanic bacterium.</title>
        <authorList>
            <person name="Giovannoni S.J."/>
            <person name="Tripp H.J."/>
            <person name="Givan S."/>
            <person name="Podar M."/>
            <person name="Vergin K.L."/>
            <person name="Baptista D."/>
            <person name="Bibbs L."/>
            <person name="Eads J."/>
            <person name="Richardson T.H."/>
            <person name="Noordewier M."/>
            <person name="Rappe M.S."/>
            <person name="Short J.M."/>
            <person name="Carrington J.C."/>
            <person name="Mathur E.J."/>
        </authorList>
    </citation>
    <scope>NUCLEOTIDE SEQUENCE [LARGE SCALE GENOMIC DNA]</scope>
    <source>
        <strain>HTCC1062</strain>
    </source>
</reference>
<keyword id="KW-0030">Aminoacyl-tRNA synthetase</keyword>
<keyword id="KW-0067">ATP-binding</keyword>
<keyword id="KW-0963">Cytoplasm</keyword>
<keyword id="KW-0436">Ligase</keyword>
<keyword id="KW-0547">Nucleotide-binding</keyword>
<keyword id="KW-0648">Protein biosynthesis</keyword>
<keyword id="KW-1185">Reference proteome</keyword>
<evidence type="ECO:0000255" key="1">
    <source>
        <dbReference type="HAMAP-Rule" id="MF_00176"/>
    </source>
</evidence>
<sequence length="419" mass="47715">MHNIKKIRNDVEAFKKALNKRFIEIDVDKILSLDENNRDYIQQRELLEKEKKDISKSKDQSLFEKSKKITVEIDNISKLQAGVKNELETILSSIPNIPHPDVPTGKDENSNVEISKSGTIPNFKFKPKSHYELGENLNMLDFDLATKTTGSRFVFVKDKLAMLERALSNFMLDTHVNTNGYEEISPPLIATDATMYGTGQLPKFDNDQFELKLDDSSDRKFLIPTAEVILTNIVKDQIIDKKKLPMRMVASTPCFRKEAGSYGKDTKGMIRQHQFYKVEMVSIVEIDKCLPELDRMTDCATKILDLLKLPYRKIVLCTGDMGFSAEKTFDIEVWLPSEDKYREISSCSSCGSFQARRMKARYKNEKKETVLVGTLNGSGLAVGRTLVAILENYQQEDGSILVPEALKPYMNNIEKIVKI</sequence>
<gene>
    <name evidence="1" type="primary">serS</name>
    <name type="ordered locus">SAR11_0978</name>
</gene>
<organism>
    <name type="scientific">Pelagibacter ubique (strain HTCC1062)</name>
    <dbReference type="NCBI Taxonomy" id="335992"/>
    <lineage>
        <taxon>Bacteria</taxon>
        <taxon>Pseudomonadati</taxon>
        <taxon>Pseudomonadota</taxon>
        <taxon>Alphaproteobacteria</taxon>
        <taxon>Candidatus Pelagibacterales</taxon>
        <taxon>Candidatus Pelagibacteraceae</taxon>
        <taxon>Candidatus Pelagibacter</taxon>
    </lineage>
</organism>
<name>SYS_PELUB</name>
<dbReference type="EC" id="6.1.1.11" evidence="1"/>
<dbReference type="EMBL" id="CP000084">
    <property type="protein sequence ID" value="AAZ21786.1"/>
    <property type="molecule type" value="Genomic_DNA"/>
</dbReference>
<dbReference type="RefSeq" id="WP_011282078.1">
    <property type="nucleotide sequence ID" value="NC_007205.1"/>
</dbReference>
<dbReference type="SMR" id="Q4FM02"/>
<dbReference type="STRING" id="335992.SAR11_0978"/>
<dbReference type="GeneID" id="66295468"/>
<dbReference type="KEGG" id="pub:SAR11_0978"/>
<dbReference type="eggNOG" id="COG0172">
    <property type="taxonomic scope" value="Bacteria"/>
</dbReference>
<dbReference type="HOGENOM" id="CLU_023797_1_1_5"/>
<dbReference type="UniPathway" id="UPA00906">
    <property type="reaction ID" value="UER00895"/>
</dbReference>
<dbReference type="Proteomes" id="UP000002528">
    <property type="component" value="Chromosome"/>
</dbReference>
<dbReference type="GO" id="GO:0005737">
    <property type="term" value="C:cytoplasm"/>
    <property type="evidence" value="ECO:0007669"/>
    <property type="project" value="UniProtKB-SubCell"/>
</dbReference>
<dbReference type="GO" id="GO:0005524">
    <property type="term" value="F:ATP binding"/>
    <property type="evidence" value="ECO:0007669"/>
    <property type="project" value="UniProtKB-UniRule"/>
</dbReference>
<dbReference type="GO" id="GO:0004828">
    <property type="term" value="F:serine-tRNA ligase activity"/>
    <property type="evidence" value="ECO:0007669"/>
    <property type="project" value="UniProtKB-UniRule"/>
</dbReference>
<dbReference type="GO" id="GO:0016260">
    <property type="term" value="P:selenocysteine biosynthetic process"/>
    <property type="evidence" value="ECO:0007669"/>
    <property type="project" value="UniProtKB-UniRule"/>
</dbReference>
<dbReference type="GO" id="GO:0006434">
    <property type="term" value="P:seryl-tRNA aminoacylation"/>
    <property type="evidence" value="ECO:0007669"/>
    <property type="project" value="UniProtKB-UniRule"/>
</dbReference>
<dbReference type="CDD" id="cd00770">
    <property type="entry name" value="SerRS_core"/>
    <property type="match status" value="1"/>
</dbReference>
<dbReference type="Gene3D" id="3.30.930.10">
    <property type="entry name" value="Bira Bifunctional Protein, Domain 2"/>
    <property type="match status" value="1"/>
</dbReference>
<dbReference type="Gene3D" id="1.10.287.40">
    <property type="entry name" value="Serine-tRNA synthetase, tRNA binding domain"/>
    <property type="match status" value="1"/>
</dbReference>
<dbReference type="HAMAP" id="MF_00176">
    <property type="entry name" value="Ser_tRNA_synth_type1"/>
    <property type="match status" value="1"/>
</dbReference>
<dbReference type="InterPro" id="IPR002314">
    <property type="entry name" value="aa-tRNA-synt_IIb"/>
</dbReference>
<dbReference type="InterPro" id="IPR006195">
    <property type="entry name" value="aa-tRNA-synth_II"/>
</dbReference>
<dbReference type="InterPro" id="IPR045864">
    <property type="entry name" value="aa-tRNA-synth_II/BPL/LPL"/>
</dbReference>
<dbReference type="InterPro" id="IPR002317">
    <property type="entry name" value="Ser-tRNA-ligase_type_1"/>
</dbReference>
<dbReference type="InterPro" id="IPR015866">
    <property type="entry name" value="Ser-tRNA-synth_1_N"/>
</dbReference>
<dbReference type="InterPro" id="IPR042103">
    <property type="entry name" value="SerRS_1_N_sf"/>
</dbReference>
<dbReference type="InterPro" id="IPR033729">
    <property type="entry name" value="SerRS_core"/>
</dbReference>
<dbReference type="InterPro" id="IPR010978">
    <property type="entry name" value="tRNA-bd_arm"/>
</dbReference>
<dbReference type="NCBIfam" id="TIGR00414">
    <property type="entry name" value="serS"/>
    <property type="match status" value="1"/>
</dbReference>
<dbReference type="PANTHER" id="PTHR43697:SF1">
    <property type="entry name" value="SERINE--TRNA LIGASE"/>
    <property type="match status" value="1"/>
</dbReference>
<dbReference type="PANTHER" id="PTHR43697">
    <property type="entry name" value="SERYL-TRNA SYNTHETASE"/>
    <property type="match status" value="1"/>
</dbReference>
<dbReference type="Pfam" id="PF02403">
    <property type="entry name" value="Seryl_tRNA_N"/>
    <property type="match status" value="1"/>
</dbReference>
<dbReference type="Pfam" id="PF00587">
    <property type="entry name" value="tRNA-synt_2b"/>
    <property type="match status" value="1"/>
</dbReference>
<dbReference type="PIRSF" id="PIRSF001529">
    <property type="entry name" value="Ser-tRNA-synth_IIa"/>
    <property type="match status" value="1"/>
</dbReference>
<dbReference type="PRINTS" id="PR00981">
    <property type="entry name" value="TRNASYNTHSER"/>
</dbReference>
<dbReference type="SUPFAM" id="SSF55681">
    <property type="entry name" value="Class II aaRS and biotin synthetases"/>
    <property type="match status" value="1"/>
</dbReference>
<dbReference type="SUPFAM" id="SSF46589">
    <property type="entry name" value="tRNA-binding arm"/>
    <property type="match status" value="1"/>
</dbReference>
<dbReference type="PROSITE" id="PS50862">
    <property type="entry name" value="AA_TRNA_LIGASE_II"/>
    <property type="match status" value="1"/>
</dbReference>